<evidence type="ECO:0000255" key="1">
    <source>
        <dbReference type="HAMAP-Rule" id="MF_01341"/>
    </source>
</evidence>
<evidence type="ECO:0000256" key="2">
    <source>
        <dbReference type="SAM" id="MobiDB-lite"/>
    </source>
</evidence>
<evidence type="ECO:0000305" key="3"/>
<organism>
    <name type="scientific">Coxiella burnetii (strain CbuK_Q154)</name>
    <name type="common">Coxiella burnetii (strain Q154)</name>
    <dbReference type="NCBI Taxonomy" id="434924"/>
    <lineage>
        <taxon>Bacteria</taxon>
        <taxon>Pseudomonadati</taxon>
        <taxon>Pseudomonadota</taxon>
        <taxon>Gammaproteobacteria</taxon>
        <taxon>Legionellales</taxon>
        <taxon>Coxiellaceae</taxon>
        <taxon>Coxiella</taxon>
    </lineage>
</organism>
<gene>
    <name evidence="1" type="primary">rplO</name>
    <name type="ordered locus">CbuK_0452</name>
</gene>
<comment type="function">
    <text evidence="1">Binds to the 23S rRNA.</text>
</comment>
<comment type="subunit">
    <text evidence="1">Part of the 50S ribosomal subunit.</text>
</comment>
<comment type="similarity">
    <text evidence="1">Belongs to the universal ribosomal protein uL15 family.</text>
</comment>
<reference key="1">
    <citation type="journal article" date="2009" name="Infect. Immun.">
        <title>Comparative genomics reveal extensive transposon-mediated genomic plasticity and diversity among potential effector proteins within the genus Coxiella.</title>
        <authorList>
            <person name="Beare P.A."/>
            <person name="Unsworth N."/>
            <person name="Andoh M."/>
            <person name="Voth D.E."/>
            <person name="Omsland A."/>
            <person name="Gilk S.D."/>
            <person name="Williams K.P."/>
            <person name="Sobral B.W."/>
            <person name="Kupko J.J. III"/>
            <person name="Porcella S.F."/>
            <person name="Samuel J.E."/>
            <person name="Heinzen R.A."/>
        </authorList>
    </citation>
    <scope>NUCLEOTIDE SEQUENCE [LARGE SCALE GENOMIC DNA]</scope>
    <source>
        <strain>CbuK_Q154</strain>
    </source>
</reference>
<accession>B6J5F1</accession>
<name>RL15_COXB1</name>
<feature type="chain" id="PRO_1000142800" description="Large ribosomal subunit protein uL15">
    <location>
        <begin position="1"/>
        <end position="143"/>
    </location>
</feature>
<feature type="region of interest" description="Disordered" evidence="2">
    <location>
        <begin position="20"/>
        <end position="52"/>
    </location>
</feature>
<feature type="compositionally biased region" description="Basic residues" evidence="2">
    <location>
        <begin position="30"/>
        <end position="39"/>
    </location>
</feature>
<dbReference type="EMBL" id="CP001020">
    <property type="protein sequence ID" value="ACJ19735.1"/>
    <property type="molecule type" value="Genomic_DNA"/>
</dbReference>
<dbReference type="RefSeq" id="WP_005771510.1">
    <property type="nucleotide sequence ID" value="NC_011528.1"/>
</dbReference>
<dbReference type="SMR" id="B6J5F1"/>
<dbReference type="KEGG" id="cbc:CbuK_0452"/>
<dbReference type="HOGENOM" id="CLU_055188_4_2_6"/>
<dbReference type="GO" id="GO:0022625">
    <property type="term" value="C:cytosolic large ribosomal subunit"/>
    <property type="evidence" value="ECO:0007669"/>
    <property type="project" value="TreeGrafter"/>
</dbReference>
<dbReference type="GO" id="GO:0019843">
    <property type="term" value="F:rRNA binding"/>
    <property type="evidence" value="ECO:0007669"/>
    <property type="project" value="UniProtKB-UniRule"/>
</dbReference>
<dbReference type="GO" id="GO:0003735">
    <property type="term" value="F:structural constituent of ribosome"/>
    <property type="evidence" value="ECO:0007669"/>
    <property type="project" value="InterPro"/>
</dbReference>
<dbReference type="GO" id="GO:0006412">
    <property type="term" value="P:translation"/>
    <property type="evidence" value="ECO:0007669"/>
    <property type="project" value="UniProtKB-UniRule"/>
</dbReference>
<dbReference type="Gene3D" id="3.100.10.10">
    <property type="match status" value="1"/>
</dbReference>
<dbReference type="HAMAP" id="MF_01341">
    <property type="entry name" value="Ribosomal_uL15"/>
    <property type="match status" value="1"/>
</dbReference>
<dbReference type="InterPro" id="IPR030878">
    <property type="entry name" value="Ribosomal_uL15"/>
</dbReference>
<dbReference type="InterPro" id="IPR021131">
    <property type="entry name" value="Ribosomal_uL15/eL18"/>
</dbReference>
<dbReference type="InterPro" id="IPR036227">
    <property type="entry name" value="Ribosomal_uL15/eL18_sf"/>
</dbReference>
<dbReference type="InterPro" id="IPR005749">
    <property type="entry name" value="Ribosomal_uL15_bac-type"/>
</dbReference>
<dbReference type="NCBIfam" id="TIGR01071">
    <property type="entry name" value="rplO_bact"/>
    <property type="match status" value="1"/>
</dbReference>
<dbReference type="PANTHER" id="PTHR12934">
    <property type="entry name" value="50S RIBOSOMAL PROTEIN L15"/>
    <property type="match status" value="1"/>
</dbReference>
<dbReference type="PANTHER" id="PTHR12934:SF11">
    <property type="entry name" value="LARGE RIBOSOMAL SUBUNIT PROTEIN UL15M"/>
    <property type="match status" value="1"/>
</dbReference>
<dbReference type="Pfam" id="PF00828">
    <property type="entry name" value="Ribosomal_L27A"/>
    <property type="match status" value="1"/>
</dbReference>
<dbReference type="SUPFAM" id="SSF52080">
    <property type="entry name" value="Ribosomal proteins L15p and L18e"/>
    <property type="match status" value="1"/>
</dbReference>
<sequence>MQLNDLKPAKGARHQKLRVGRGIGSGKGKTAGRGHKGQHSRAGGYHKVGFEGGQMPLQRRVPKFGFTSRKELISAEVRLGELNKISGDVVDLASLKAANIISRQIKRVKIFAAGKLEKPVTIRGLRVTKGVKAAIEAAGGKIE</sequence>
<proteinExistence type="inferred from homology"/>
<protein>
    <recommendedName>
        <fullName evidence="1">Large ribosomal subunit protein uL15</fullName>
    </recommendedName>
    <alternativeName>
        <fullName evidence="3">50S ribosomal protein L15</fullName>
    </alternativeName>
</protein>
<keyword id="KW-0687">Ribonucleoprotein</keyword>
<keyword id="KW-0689">Ribosomal protein</keyword>
<keyword id="KW-0694">RNA-binding</keyword>
<keyword id="KW-0699">rRNA-binding</keyword>